<keyword id="KW-0131">Cell cycle</keyword>
<keyword id="KW-0132">Cell division</keyword>
<keyword id="KW-0143">Chaperone</keyword>
<keyword id="KW-0963">Cytoplasm</keyword>
<keyword id="KW-0413">Isomerase</keyword>
<keyword id="KW-1185">Reference proteome</keyword>
<keyword id="KW-0697">Rotamase</keyword>
<sequence length="432" mass="47814">MQGNLEVLEGLARRLDISVPVDQLETEVQSRLKRLARSVKMHGFRPGKAPLSAVARQHGAGVRQEVLGETLKTRFGEAVQTHQLRIAGYPRFEPKADASAAAEMTFSASFEVYPEVKIDALDSATLNRPVVELGDADVAKTLEVLQKQRRTFATAARAAAEGDLVKFDYQGTVDGAPFEGGRGEDFAAVIGEGRLLKDFEQALVGLKAGDSKGFDLTFPAEYAARELADKTAHFEVQVKEVQAPVLPPVDAEFAEALGVEDGDVEKLKAEVKSNLEREVKRRVQAKLKEQAMELLLQKSTLDLPRSLVEMEMDRLRRMTEADMQSRGVQSMKLSADMFTGQAERRVRLGLILAEIVQANKLAAQPEQIRSLIQDQAQSYEEPDQVVQWYYQSPERMQEIESLALEENVVAWVADQATVVDVATSFDELMGRA</sequence>
<proteinExistence type="inferred from homology"/>
<feature type="chain" id="PRO_0000256639" description="Trigger factor">
    <location>
        <begin position="1"/>
        <end position="432"/>
    </location>
</feature>
<feature type="domain" description="PPIase FKBP-type" evidence="1">
    <location>
        <begin position="162"/>
        <end position="247"/>
    </location>
</feature>
<comment type="function">
    <text evidence="1">Involved in protein export. Acts as a chaperone by maintaining the newly synthesized protein in an open conformation. Functions as a peptidyl-prolyl cis-trans isomerase.</text>
</comment>
<comment type="catalytic activity">
    <reaction evidence="1">
        <text>[protein]-peptidylproline (omega=180) = [protein]-peptidylproline (omega=0)</text>
        <dbReference type="Rhea" id="RHEA:16237"/>
        <dbReference type="Rhea" id="RHEA-COMP:10747"/>
        <dbReference type="Rhea" id="RHEA-COMP:10748"/>
        <dbReference type="ChEBI" id="CHEBI:83833"/>
        <dbReference type="ChEBI" id="CHEBI:83834"/>
        <dbReference type="EC" id="5.2.1.8"/>
    </reaction>
</comment>
<comment type="subcellular location">
    <subcellularLocation>
        <location>Cytoplasm</location>
    </subcellularLocation>
    <text evidence="1">About half TF is bound to the ribosome near the polypeptide exit tunnel while the other half is free in the cytoplasm.</text>
</comment>
<comment type="domain">
    <text evidence="1">Consists of 3 domains; the N-terminus binds the ribosome, the middle domain has PPIase activity, while the C-terminus has intrinsic chaperone activity on its own.</text>
</comment>
<comment type="similarity">
    <text evidence="1">Belongs to the FKBP-type PPIase family. Tig subfamily.</text>
</comment>
<name>TIG_THIDA</name>
<accession>Q3SI97</accession>
<gene>
    <name evidence="1" type="primary">tig</name>
    <name type="ordered locus">Tbd_1678</name>
</gene>
<dbReference type="EC" id="5.2.1.8" evidence="1"/>
<dbReference type="EMBL" id="CP000116">
    <property type="protein sequence ID" value="AAZ97631.1"/>
    <property type="molecule type" value="Genomic_DNA"/>
</dbReference>
<dbReference type="RefSeq" id="WP_011312190.1">
    <property type="nucleotide sequence ID" value="NC_007404.1"/>
</dbReference>
<dbReference type="SMR" id="Q3SI97"/>
<dbReference type="STRING" id="292415.Tbd_1678"/>
<dbReference type="KEGG" id="tbd:Tbd_1678"/>
<dbReference type="eggNOG" id="COG0544">
    <property type="taxonomic scope" value="Bacteria"/>
</dbReference>
<dbReference type="HOGENOM" id="CLU_033058_2_0_4"/>
<dbReference type="OrthoDB" id="9767721at2"/>
<dbReference type="Proteomes" id="UP000008291">
    <property type="component" value="Chromosome"/>
</dbReference>
<dbReference type="GO" id="GO:0005737">
    <property type="term" value="C:cytoplasm"/>
    <property type="evidence" value="ECO:0007669"/>
    <property type="project" value="UniProtKB-SubCell"/>
</dbReference>
<dbReference type="GO" id="GO:0003755">
    <property type="term" value="F:peptidyl-prolyl cis-trans isomerase activity"/>
    <property type="evidence" value="ECO:0007669"/>
    <property type="project" value="UniProtKB-UniRule"/>
</dbReference>
<dbReference type="GO" id="GO:0044183">
    <property type="term" value="F:protein folding chaperone"/>
    <property type="evidence" value="ECO:0007669"/>
    <property type="project" value="TreeGrafter"/>
</dbReference>
<dbReference type="GO" id="GO:0043022">
    <property type="term" value="F:ribosome binding"/>
    <property type="evidence" value="ECO:0007669"/>
    <property type="project" value="TreeGrafter"/>
</dbReference>
<dbReference type="GO" id="GO:0051083">
    <property type="term" value="P:'de novo' cotranslational protein folding"/>
    <property type="evidence" value="ECO:0007669"/>
    <property type="project" value="TreeGrafter"/>
</dbReference>
<dbReference type="GO" id="GO:0051301">
    <property type="term" value="P:cell division"/>
    <property type="evidence" value="ECO:0007669"/>
    <property type="project" value="UniProtKB-KW"/>
</dbReference>
<dbReference type="GO" id="GO:0061077">
    <property type="term" value="P:chaperone-mediated protein folding"/>
    <property type="evidence" value="ECO:0007669"/>
    <property type="project" value="TreeGrafter"/>
</dbReference>
<dbReference type="GO" id="GO:0015031">
    <property type="term" value="P:protein transport"/>
    <property type="evidence" value="ECO:0007669"/>
    <property type="project" value="UniProtKB-UniRule"/>
</dbReference>
<dbReference type="GO" id="GO:0043335">
    <property type="term" value="P:protein unfolding"/>
    <property type="evidence" value="ECO:0007669"/>
    <property type="project" value="TreeGrafter"/>
</dbReference>
<dbReference type="FunFam" id="3.10.50.40:FF:000001">
    <property type="entry name" value="Trigger factor"/>
    <property type="match status" value="1"/>
</dbReference>
<dbReference type="Gene3D" id="3.10.50.40">
    <property type="match status" value="1"/>
</dbReference>
<dbReference type="Gene3D" id="3.30.70.1050">
    <property type="entry name" value="Trigger factor ribosome-binding domain"/>
    <property type="match status" value="1"/>
</dbReference>
<dbReference type="Gene3D" id="1.10.3120.10">
    <property type="entry name" value="Trigger factor, C-terminal domain"/>
    <property type="match status" value="1"/>
</dbReference>
<dbReference type="HAMAP" id="MF_00303">
    <property type="entry name" value="Trigger_factor_Tig"/>
    <property type="match status" value="1"/>
</dbReference>
<dbReference type="InterPro" id="IPR046357">
    <property type="entry name" value="PPIase_dom_sf"/>
</dbReference>
<dbReference type="InterPro" id="IPR001179">
    <property type="entry name" value="PPIase_FKBP_dom"/>
</dbReference>
<dbReference type="InterPro" id="IPR005215">
    <property type="entry name" value="Trig_fac"/>
</dbReference>
<dbReference type="InterPro" id="IPR008880">
    <property type="entry name" value="Trigger_fac_C"/>
</dbReference>
<dbReference type="InterPro" id="IPR037041">
    <property type="entry name" value="Trigger_fac_C_sf"/>
</dbReference>
<dbReference type="InterPro" id="IPR008881">
    <property type="entry name" value="Trigger_fac_ribosome-bd_bac"/>
</dbReference>
<dbReference type="InterPro" id="IPR036611">
    <property type="entry name" value="Trigger_fac_ribosome-bd_sf"/>
</dbReference>
<dbReference type="InterPro" id="IPR027304">
    <property type="entry name" value="Trigger_fact/SurA_dom_sf"/>
</dbReference>
<dbReference type="NCBIfam" id="TIGR00115">
    <property type="entry name" value="tig"/>
    <property type="match status" value="1"/>
</dbReference>
<dbReference type="PANTHER" id="PTHR30560">
    <property type="entry name" value="TRIGGER FACTOR CHAPERONE AND PEPTIDYL-PROLYL CIS/TRANS ISOMERASE"/>
    <property type="match status" value="1"/>
</dbReference>
<dbReference type="PANTHER" id="PTHR30560:SF3">
    <property type="entry name" value="TRIGGER FACTOR-LIKE PROTEIN TIG, CHLOROPLASTIC"/>
    <property type="match status" value="1"/>
</dbReference>
<dbReference type="Pfam" id="PF00254">
    <property type="entry name" value="FKBP_C"/>
    <property type="match status" value="1"/>
</dbReference>
<dbReference type="Pfam" id="PF05698">
    <property type="entry name" value="Trigger_C"/>
    <property type="match status" value="1"/>
</dbReference>
<dbReference type="Pfam" id="PF05697">
    <property type="entry name" value="Trigger_N"/>
    <property type="match status" value="1"/>
</dbReference>
<dbReference type="PIRSF" id="PIRSF003095">
    <property type="entry name" value="Trigger_factor"/>
    <property type="match status" value="1"/>
</dbReference>
<dbReference type="SUPFAM" id="SSF54534">
    <property type="entry name" value="FKBP-like"/>
    <property type="match status" value="1"/>
</dbReference>
<dbReference type="SUPFAM" id="SSF109998">
    <property type="entry name" value="Triger factor/SurA peptide-binding domain-like"/>
    <property type="match status" value="1"/>
</dbReference>
<dbReference type="SUPFAM" id="SSF102735">
    <property type="entry name" value="Trigger factor ribosome-binding domain"/>
    <property type="match status" value="1"/>
</dbReference>
<dbReference type="PROSITE" id="PS50059">
    <property type="entry name" value="FKBP_PPIASE"/>
    <property type="match status" value="1"/>
</dbReference>
<organism>
    <name type="scientific">Thiobacillus denitrificans (strain ATCC 25259 / T1)</name>
    <dbReference type="NCBI Taxonomy" id="292415"/>
    <lineage>
        <taxon>Bacteria</taxon>
        <taxon>Pseudomonadati</taxon>
        <taxon>Pseudomonadota</taxon>
        <taxon>Betaproteobacteria</taxon>
        <taxon>Nitrosomonadales</taxon>
        <taxon>Thiobacillaceae</taxon>
        <taxon>Thiobacillus</taxon>
    </lineage>
</organism>
<evidence type="ECO:0000255" key="1">
    <source>
        <dbReference type="HAMAP-Rule" id="MF_00303"/>
    </source>
</evidence>
<reference key="1">
    <citation type="journal article" date="2006" name="J. Bacteriol.">
        <title>The genome sequence of the obligately chemolithoautotrophic, facultatively anaerobic bacterium Thiobacillus denitrificans.</title>
        <authorList>
            <person name="Beller H.R."/>
            <person name="Chain P.S."/>
            <person name="Letain T.E."/>
            <person name="Chakicherla A."/>
            <person name="Larimer F.W."/>
            <person name="Richardson P.M."/>
            <person name="Coleman M.A."/>
            <person name="Wood A.P."/>
            <person name="Kelly D.P."/>
        </authorList>
    </citation>
    <scope>NUCLEOTIDE SEQUENCE [LARGE SCALE GENOMIC DNA]</scope>
    <source>
        <strain>ATCC 25259 / T1</strain>
    </source>
</reference>
<protein>
    <recommendedName>
        <fullName evidence="1">Trigger factor</fullName>
        <shortName evidence="1">TF</shortName>
        <ecNumber evidence="1">5.2.1.8</ecNumber>
    </recommendedName>
    <alternativeName>
        <fullName evidence="1">PPIase</fullName>
    </alternativeName>
</protein>